<dbReference type="EMBL" id="AE004091">
    <property type="protein sequence ID" value="AAG07634.1"/>
    <property type="molecule type" value="Genomic_DNA"/>
</dbReference>
<dbReference type="PIR" id="D83114">
    <property type="entry name" value="D83114"/>
</dbReference>
<dbReference type="RefSeq" id="NP_252936.1">
    <property type="nucleotide sequence ID" value="NC_002516.2"/>
</dbReference>
<dbReference type="RefSeq" id="WP_003093697.1">
    <property type="nucleotide sequence ID" value="NZ_QZGE01000028.1"/>
</dbReference>
<dbReference type="PDB" id="7UNR">
    <property type="method" value="EM"/>
    <property type="resolution" value="2.90 A"/>
    <property type="chains" value="e=1-166"/>
</dbReference>
<dbReference type="PDB" id="7UNU">
    <property type="method" value="EM"/>
    <property type="resolution" value="2.90 A"/>
    <property type="chains" value="e=1-166"/>
</dbReference>
<dbReference type="PDB" id="7UNV">
    <property type="method" value="EM"/>
    <property type="resolution" value="2.70 A"/>
    <property type="chains" value="e=1-166"/>
</dbReference>
<dbReference type="PDB" id="7UNW">
    <property type="method" value="EM"/>
    <property type="resolution" value="2.60 A"/>
    <property type="chains" value="e=1-166"/>
</dbReference>
<dbReference type="PDB" id="8CD1">
    <property type="method" value="EM"/>
    <property type="resolution" value="3.00 A"/>
    <property type="chains" value="e=1-166"/>
</dbReference>
<dbReference type="PDB" id="8RWG">
    <property type="method" value="EM"/>
    <property type="resolution" value="2.46 A"/>
    <property type="chains" value="d=1-166"/>
</dbReference>
<dbReference type="PDBsum" id="7UNR"/>
<dbReference type="PDBsum" id="7UNU"/>
<dbReference type="PDBsum" id="7UNV"/>
<dbReference type="PDBsum" id="7UNW"/>
<dbReference type="PDBsum" id="8CD1"/>
<dbReference type="PDBsum" id="8RWG"/>
<dbReference type="EMDB" id="EMD-16566"/>
<dbReference type="EMDB" id="EMD-19547"/>
<dbReference type="EMDB" id="EMD-26630"/>
<dbReference type="EMDB" id="EMD-26633"/>
<dbReference type="EMDB" id="EMD-26634"/>
<dbReference type="EMDB" id="EMD-26635"/>
<dbReference type="SMR" id="Q9HWF2"/>
<dbReference type="FunCoup" id="Q9HWF2">
    <property type="interactions" value="996"/>
</dbReference>
<dbReference type="STRING" id="208964.PA4246"/>
<dbReference type="PaxDb" id="208964-PA4246"/>
<dbReference type="GeneID" id="77219215"/>
<dbReference type="GeneID" id="881788"/>
<dbReference type="KEGG" id="pae:PA4246"/>
<dbReference type="PATRIC" id="fig|208964.12.peg.4447"/>
<dbReference type="PseudoCAP" id="PA4246"/>
<dbReference type="HOGENOM" id="CLU_065898_2_2_6"/>
<dbReference type="InParanoid" id="Q9HWF2"/>
<dbReference type="OrthoDB" id="9809045at2"/>
<dbReference type="PhylomeDB" id="Q9HWF2"/>
<dbReference type="BioCyc" id="PAER208964:G1FZ6-4319-MONOMER"/>
<dbReference type="PRO" id="PR:Q9HWF2"/>
<dbReference type="Proteomes" id="UP000002438">
    <property type="component" value="Chromosome"/>
</dbReference>
<dbReference type="GO" id="GO:0022627">
    <property type="term" value="C:cytosolic small ribosomal subunit"/>
    <property type="evidence" value="ECO:0000318"/>
    <property type="project" value="GO_Central"/>
</dbReference>
<dbReference type="GO" id="GO:0019843">
    <property type="term" value="F:rRNA binding"/>
    <property type="evidence" value="ECO:0007669"/>
    <property type="project" value="UniProtKB-UniRule"/>
</dbReference>
<dbReference type="GO" id="GO:0003735">
    <property type="term" value="F:structural constituent of ribosome"/>
    <property type="evidence" value="ECO:0000318"/>
    <property type="project" value="GO_Central"/>
</dbReference>
<dbReference type="GO" id="GO:0006412">
    <property type="term" value="P:translation"/>
    <property type="evidence" value="ECO:0000318"/>
    <property type="project" value="GO_Central"/>
</dbReference>
<dbReference type="FunFam" id="3.30.160.20:FF:000001">
    <property type="entry name" value="30S ribosomal protein S5"/>
    <property type="match status" value="1"/>
</dbReference>
<dbReference type="FunFam" id="3.30.230.10:FF:000002">
    <property type="entry name" value="30S ribosomal protein S5"/>
    <property type="match status" value="1"/>
</dbReference>
<dbReference type="Gene3D" id="3.30.160.20">
    <property type="match status" value="1"/>
</dbReference>
<dbReference type="Gene3D" id="3.30.230.10">
    <property type="match status" value="1"/>
</dbReference>
<dbReference type="HAMAP" id="MF_01307_B">
    <property type="entry name" value="Ribosomal_uS5_B"/>
    <property type="match status" value="1"/>
</dbReference>
<dbReference type="InterPro" id="IPR020568">
    <property type="entry name" value="Ribosomal_Su5_D2-typ_SF"/>
</dbReference>
<dbReference type="InterPro" id="IPR000851">
    <property type="entry name" value="Ribosomal_uS5"/>
</dbReference>
<dbReference type="InterPro" id="IPR005712">
    <property type="entry name" value="Ribosomal_uS5_bac-type"/>
</dbReference>
<dbReference type="InterPro" id="IPR005324">
    <property type="entry name" value="Ribosomal_uS5_C"/>
</dbReference>
<dbReference type="InterPro" id="IPR013810">
    <property type="entry name" value="Ribosomal_uS5_N"/>
</dbReference>
<dbReference type="InterPro" id="IPR018192">
    <property type="entry name" value="Ribosomal_uS5_N_CS"/>
</dbReference>
<dbReference type="InterPro" id="IPR014721">
    <property type="entry name" value="Ribsml_uS5_D2-typ_fold_subgr"/>
</dbReference>
<dbReference type="NCBIfam" id="TIGR01021">
    <property type="entry name" value="rpsE_bact"/>
    <property type="match status" value="1"/>
</dbReference>
<dbReference type="PANTHER" id="PTHR48277">
    <property type="entry name" value="MITOCHONDRIAL RIBOSOMAL PROTEIN S5"/>
    <property type="match status" value="1"/>
</dbReference>
<dbReference type="PANTHER" id="PTHR48277:SF1">
    <property type="entry name" value="MITOCHONDRIAL RIBOSOMAL PROTEIN S5"/>
    <property type="match status" value="1"/>
</dbReference>
<dbReference type="Pfam" id="PF00333">
    <property type="entry name" value="Ribosomal_S5"/>
    <property type="match status" value="1"/>
</dbReference>
<dbReference type="Pfam" id="PF03719">
    <property type="entry name" value="Ribosomal_S5_C"/>
    <property type="match status" value="1"/>
</dbReference>
<dbReference type="SUPFAM" id="SSF54768">
    <property type="entry name" value="dsRNA-binding domain-like"/>
    <property type="match status" value="1"/>
</dbReference>
<dbReference type="SUPFAM" id="SSF54211">
    <property type="entry name" value="Ribosomal protein S5 domain 2-like"/>
    <property type="match status" value="1"/>
</dbReference>
<dbReference type="PROSITE" id="PS00585">
    <property type="entry name" value="RIBOSOMAL_S5"/>
    <property type="match status" value="1"/>
</dbReference>
<dbReference type="PROSITE" id="PS50881">
    <property type="entry name" value="S5_DSRBD"/>
    <property type="match status" value="1"/>
</dbReference>
<gene>
    <name evidence="2" type="primary">rpsE</name>
    <name type="ordered locus">PA4246</name>
</gene>
<evidence type="ECO:0000250" key="1"/>
<evidence type="ECO:0000255" key="2">
    <source>
        <dbReference type="HAMAP-Rule" id="MF_01307"/>
    </source>
</evidence>
<evidence type="ECO:0000305" key="3"/>
<organism>
    <name type="scientific">Pseudomonas aeruginosa (strain ATCC 15692 / DSM 22644 / CIP 104116 / JCM 14847 / LMG 12228 / 1C / PRS 101 / PAO1)</name>
    <dbReference type="NCBI Taxonomy" id="208964"/>
    <lineage>
        <taxon>Bacteria</taxon>
        <taxon>Pseudomonadati</taxon>
        <taxon>Pseudomonadota</taxon>
        <taxon>Gammaproteobacteria</taxon>
        <taxon>Pseudomonadales</taxon>
        <taxon>Pseudomonadaceae</taxon>
        <taxon>Pseudomonas</taxon>
    </lineage>
</organism>
<sequence>MANNEQKRDEGYIEKLVQVNRVAKTVKGGRIFAFTALTVVGDGKGRVGFGRGKAREVPAAIQKAMEAARRNMIQVDLNGTTLQYPTKSAHGASKVYMQPASEGTGIIAGGAMRAVLEVAGVQNVLAKCYGSTNPVNVVYATFKGLKNMQAPEAVAAKRGKSVEEIL</sequence>
<feature type="initiator methionine" description="Removed" evidence="1">
    <location>
        <position position="1"/>
    </location>
</feature>
<feature type="chain" id="PRO_0000131574" description="Small ribosomal subunit protein uS5">
    <location>
        <begin position="2"/>
        <end position="166"/>
    </location>
</feature>
<feature type="domain" description="S5 DRBM" evidence="2">
    <location>
        <begin position="12"/>
        <end position="75"/>
    </location>
</feature>
<feature type="modified residue" description="N-acetylalanine" evidence="1">
    <location>
        <position position="2"/>
    </location>
</feature>
<keyword id="KW-0002">3D-structure</keyword>
<keyword id="KW-0007">Acetylation</keyword>
<keyword id="KW-1185">Reference proteome</keyword>
<keyword id="KW-0687">Ribonucleoprotein</keyword>
<keyword id="KW-0689">Ribosomal protein</keyword>
<keyword id="KW-0694">RNA-binding</keyword>
<keyword id="KW-0699">rRNA-binding</keyword>
<accession>Q9HWF2</accession>
<comment type="function">
    <text evidence="2">With S4 and S12 plays an important role in translational accuracy.</text>
</comment>
<comment type="function">
    <text evidence="2">Located at the back of the 30S subunit body where it stabilizes the conformation of the head with respect to the body.</text>
</comment>
<comment type="subunit">
    <text evidence="2">Part of the 30S ribosomal subunit. Contacts proteins S4 and S8.</text>
</comment>
<comment type="domain">
    <text>The N-terminal domain interacts with the head of the 30S subunit; the C-terminal domain interacts with the body and contacts protein S4. The interaction surface between S4 and S5 is involved in control of translational fidelity.</text>
</comment>
<comment type="similarity">
    <text evidence="2">Belongs to the universal ribosomal protein uS5 family.</text>
</comment>
<name>RS5_PSEAE</name>
<protein>
    <recommendedName>
        <fullName evidence="2">Small ribosomal subunit protein uS5</fullName>
    </recommendedName>
    <alternativeName>
        <fullName evidence="3">30S ribosomal protein S5</fullName>
    </alternativeName>
</protein>
<reference key="1">
    <citation type="journal article" date="2000" name="Nature">
        <title>Complete genome sequence of Pseudomonas aeruginosa PAO1, an opportunistic pathogen.</title>
        <authorList>
            <person name="Stover C.K."/>
            <person name="Pham X.-Q.T."/>
            <person name="Erwin A.L."/>
            <person name="Mizoguchi S.D."/>
            <person name="Warrener P."/>
            <person name="Hickey M.J."/>
            <person name="Brinkman F.S.L."/>
            <person name="Hufnagle W.O."/>
            <person name="Kowalik D.J."/>
            <person name="Lagrou M."/>
            <person name="Garber R.L."/>
            <person name="Goltry L."/>
            <person name="Tolentino E."/>
            <person name="Westbrock-Wadman S."/>
            <person name="Yuan Y."/>
            <person name="Brody L.L."/>
            <person name="Coulter S.N."/>
            <person name="Folger K.R."/>
            <person name="Kas A."/>
            <person name="Larbig K."/>
            <person name="Lim R.M."/>
            <person name="Smith K.A."/>
            <person name="Spencer D.H."/>
            <person name="Wong G.K.-S."/>
            <person name="Wu Z."/>
            <person name="Paulsen I.T."/>
            <person name="Reizer J."/>
            <person name="Saier M.H. Jr."/>
            <person name="Hancock R.E.W."/>
            <person name="Lory S."/>
            <person name="Olson M.V."/>
        </authorList>
    </citation>
    <scope>NUCLEOTIDE SEQUENCE [LARGE SCALE GENOMIC DNA]</scope>
    <source>
        <strain>ATCC 15692 / DSM 22644 / CIP 104116 / JCM 14847 / LMG 12228 / 1C / PRS 101 / PAO1</strain>
    </source>
</reference>
<proteinExistence type="evidence at protein level"/>